<comment type="function">
    <text evidence="1">Inhibits the Ras signaling pathway through its intrinsic Ras GTPase-activating protein (GAP) activity. Acts as a negative feedback inhibitor of the calcineurin signaling pathway that also mediates crosstalk between calcineurin and Ras (By similarity).</text>
</comment>
<comment type="subunit">
    <text evidence="1">Interacts with both calcineurin and HRAS.</text>
</comment>
<comment type="alternative products">
    <event type="alternative splicing"/>
    <isoform>
        <id>Q8C9V1-1</id>
        <name>1</name>
        <sequence type="displayed"/>
    </isoform>
    <isoform>
        <id>Q8C9V1-2</id>
        <name>2</name>
        <sequence type="described" ref="VSP_024538"/>
    </isoform>
    <isoform>
        <id>Q8C9V1-3</id>
        <name>3</name>
        <sequence type="described" ref="VSP_024536"/>
    </isoform>
    <isoform>
        <id>Q8C9V1-4</id>
        <name>4</name>
        <sequence type="described" ref="VSP_024537 VSP_024539"/>
    </isoform>
</comment>
<comment type="domain">
    <text evidence="1">The arginine and glutamine fingers are critical for the GTPase-activating mechanism, they pull out Rab's 'switch 2' glutamine and insert in Rab's active site.</text>
</comment>
<comment type="sequence caution" evidence="6">
    <conflict type="erroneous initiation">
        <sequence resource="EMBL-CDS" id="BAD21427"/>
    </conflict>
</comment>
<dbReference type="EMBL" id="AK131177">
    <property type="protein sequence ID" value="BAD21427.1"/>
    <property type="status" value="ALT_INIT"/>
    <property type="molecule type" value="mRNA"/>
</dbReference>
<dbReference type="EMBL" id="AK038366">
    <property type="protein sequence ID" value="BAE20537.1"/>
    <property type="molecule type" value="mRNA"/>
</dbReference>
<dbReference type="EMBL" id="AK040487">
    <property type="protein sequence ID" value="BAC30605.1"/>
    <property type="molecule type" value="mRNA"/>
</dbReference>
<dbReference type="EMBL" id="AK075803">
    <property type="protein sequence ID" value="BAC35971.1"/>
    <property type="molecule type" value="mRNA"/>
</dbReference>
<dbReference type="EMBL" id="AK088119">
    <property type="protein sequence ID" value="BAC40158.1"/>
    <property type="molecule type" value="mRNA"/>
</dbReference>
<dbReference type="EMBL" id="AK146426">
    <property type="protein sequence ID" value="BAE27160.1"/>
    <property type="molecule type" value="mRNA"/>
</dbReference>
<dbReference type="CCDS" id="CCDS37885.1">
    <molecule id="Q8C9V1-1"/>
</dbReference>
<dbReference type="RefSeq" id="NP_848765.2">
    <molecule id="Q8C9V1-1"/>
    <property type="nucleotide sequence ID" value="NM_178650.3"/>
</dbReference>
<dbReference type="RefSeq" id="XP_006531689.1">
    <molecule id="Q8C9V1-1"/>
    <property type="nucleotide sequence ID" value="XM_006531626.3"/>
</dbReference>
<dbReference type="RefSeq" id="XP_036017289.1">
    <molecule id="Q8C9V1-1"/>
    <property type="nucleotide sequence ID" value="XM_036161396.1"/>
</dbReference>
<dbReference type="SMR" id="Q8C9V1"/>
<dbReference type="FunCoup" id="Q8C9V1">
    <property type="interactions" value="175"/>
</dbReference>
<dbReference type="STRING" id="10090.ENSMUSP00000158437"/>
<dbReference type="iPTMnet" id="Q8C9V1"/>
<dbReference type="PhosphoSitePlus" id="Q8C9V1"/>
<dbReference type="jPOST" id="Q8C9V1"/>
<dbReference type="PaxDb" id="10090-ENSMUSP00000042660"/>
<dbReference type="ProteomicsDB" id="262933">
    <molecule id="Q8C9V1-1"/>
</dbReference>
<dbReference type="ProteomicsDB" id="262934">
    <molecule id="Q8C9V1-2"/>
</dbReference>
<dbReference type="ProteomicsDB" id="262935">
    <molecule id="Q8C9V1-3"/>
</dbReference>
<dbReference type="ProteomicsDB" id="262936">
    <molecule id="Q8C9V1-4"/>
</dbReference>
<dbReference type="Antibodypedia" id="30378">
    <property type="antibodies" value="140 antibodies from 24 providers"/>
</dbReference>
<dbReference type="DNASU" id="108995"/>
<dbReference type="Ensembl" id="ENSMUST00000045864.4">
    <molecule id="Q8C9V1-2"/>
    <property type="protein sequence ID" value="ENSMUSP00000042660.4"/>
    <property type="gene ID" value="ENSMUSG00000040247.7"/>
</dbReference>
<dbReference type="Ensembl" id="ENSMUST00000235450.2">
    <molecule id="Q8C9V1-1"/>
    <property type="protein sequence ID" value="ENSMUSP00000158437.2"/>
    <property type="gene ID" value="ENSMUSG00000040247.7"/>
</dbReference>
<dbReference type="Ensembl" id="ENSMUST00000235487.2">
    <molecule id="Q8C9V1-4"/>
    <property type="protein sequence ID" value="ENSMUSP00000158162.2"/>
    <property type="gene ID" value="ENSMUSG00000040247.7"/>
</dbReference>
<dbReference type="Ensembl" id="ENSMUST00000236780.2">
    <molecule id="Q8C9V1-4"/>
    <property type="protein sequence ID" value="ENSMUSP00000158519.2"/>
    <property type="gene ID" value="ENSMUSG00000040247.7"/>
</dbReference>
<dbReference type="Ensembl" id="ENSMUST00000237495.2">
    <molecule id="Q8C9V1-4"/>
    <property type="protein sequence ID" value="ENSMUSP00000158341.2"/>
    <property type="gene ID" value="ENSMUSG00000040247.7"/>
</dbReference>
<dbReference type="GeneID" id="108995"/>
<dbReference type="KEGG" id="mmu:108995"/>
<dbReference type="UCSC" id="uc008fze.1">
    <molecule id="Q8C9V1-1"/>
    <property type="organism name" value="mouse"/>
</dbReference>
<dbReference type="UCSC" id="uc012bgh.1">
    <molecule id="Q8C9V1-2"/>
    <property type="organism name" value="mouse"/>
</dbReference>
<dbReference type="AGR" id="MGI:1922072"/>
<dbReference type="CTD" id="374403"/>
<dbReference type="MGI" id="MGI:1922072">
    <property type="gene designation" value="Tbc1d10c"/>
</dbReference>
<dbReference type="VEuPathDB" id="HostDB:ENSMUSG00000040247"/>
<dbReference type="eggNOG" id="KOG2221">
    <property type="taxonomic scope" value="Eukaryota"/>
</dbReference>
<dbReference type="GeneTree" id="ENSGT00940000161287"/>
<dbReference type="HOGENOM" id="CLU_005350_2_1_1"/>
<dbReference type="InParanoid" id="Q8C9V1"/>
<dbReference type="OMA" id="RPHRSSF"/>
<dbReference type="OrthoDB" id="159449at2759"/>
<dbReference type="PhylomeDB" id="Q8C9V1"/>
<dbReference type="TreeFam" id="TF313293"/>
<dbReference type="Reactome" id="R-MMU-6798695">
    <property type="pathway name" value="Neutrophil degranulation"/>
</dbReference>
<dbReference type="Reactome" id="R-MMU-8854214">
    <property type="pathway name" value="TBC/RABGAPs"/>
</dbReference>
<dbReference type="BioGRID-ORCS" id="108995">
    <property type="hits" value="0 hits in 77 CRISPR screens"/>
</dbReference>
<dbReference type="ChiTaRS" id="Tbc1d10c">
    <property type="organism name" value="mouse"/>
</dbReference>
<dbReference type="PRO" id="PR:Q8C9V1"/>
<dbReference type="Proteomes" id="UP000000589">
    <property type="component" value="Chromosome 19"/>
</dbReference>
<dbReference type="RNAct" id="Q8C9V1">
    <property type="molecule type" value="protein"/>
</dbReference>
<dbReference type="Bgee" id="ENSMUSG00000040247">
    <property type="expression patterns" value="Expressed in granulocyte and 59 other cell types or tissues"/>
</dbReference>
<dbReference type="ExpressionAtlas" id="Q8C9V1">
    <property type="expression patterns" value="baseline and differential"/>
</dbReference>
<dbReference type="GO" id="GO:0005829">
    <property type="term" value="C:cytosol"/>
    <property type="evidence" value="ECO:0007669"/>
    <property type="project" value="GOC"/>
</dbReference>
<dbReference type="GO" id="GO:0031527">
    <property type="term" value="C:filopodium membrane"/>
    <property type="evidence" value="ECO:0007669"/>
    <property type="project" value="Ensembl"/>
</dbReference>
<dbReference type="GO" id="GO:0005096">
    <property type="term" value="F:GTPase activator activity"/>
    <property type="evidence" value="ECO:0007669"/>
    <property type="project" value="UniProtKB-KW"/>
</dbReference>
<dbReference type="GO" id="GO:0042113">
    <property type="term" value="P:B cell activation"/>
    <property type="evidence" value="ECO:0000316"/>
    <property type="project" value="MGI"/>
</dbReference>
<dbReference type="GO" id="GO:0033173">
    <property type="term" value="P:calcineurin-NFAT signaling cascade"/>
    <property type="evidence" value="ECO:0000315"/>
    <property type="project" value="MGI"/>
</dbReference>
<dbReference type="GO" id="GO:0070371">
    <property type="term" value="P:ERK1 and ERK2 cascade"/>
    <property type="evidence" value="ECO:0000315"/>
    <property type="project" value="MGI"/>
</dbReference>
<dbReference type="GO" id="GO:0050869">
    <property type="term" value="P:negative regulation of B cell activation"/>
    <property type="evidence" value="ECO:0000315"/>
    <property type="project" value="MGI"/>
</dbReference>
<dbReference type="GO" id="GO:0070885">
    <property type="term" value="P:negative regulation of calcineurin-NFAT signaling cascade"/>
    <property type="evidence" value="ECO:0000315"/>
    <property type="project" value="MGI"/>
</dbReference>
<dbReference type="GO" id="GO:0070373">
    <property type="term" value="P:negative regulation of ERK1 and ERK2 cascade"/>
    <property type="evidence" value="ECO:0000315"/>
    <property type="project" value="MGI"/>
</dbReference>
<dbReference type="GO" id="GO:0042147">
    <property type="term" value="P:retrograde transport, endosome to Golgi"/>
    <property type="evidence" value="ECO:0007669"/>
    <property type="project" value="Ensembl"/>
</dbReference>
<dbReference type="FunFam" id="1.10.472.80:FF:000042">
    <property type="entry name" value="carabin isoform X2"/>
    <property type="match status" value="1"/>
</dbReference>
<dbReference type="FunFam" id="1.10.10.750:FF:000001">
    <property type="entry name" value="TBC1 domain family member 10A"/>
    <property type="match status" value="1"/>
</dbReference>
<dbReference type="FunFam" id="1.10.8.270:FF:000007">
    <property type="entry name" value="TBC1 domain family member 10A"/>
    <property type="match status" value="1"/>
</dbReference>
<dbReference type="Gene3D" id="1.10.8.270">
    <property type="entry name" value="putative rabgap domain of human tbc1 domain family member 14 like domains"/>
    <property type="match status" value="1"/>
</dbReference>
<dbReference type="Gene3D" id="1.10.10.750">
    <property type="entry name" value="Ypt/Rab-GAP domain of gyp1p, domain 1"/>
    <property type="match status" value="1"/>
</dbReference>
<dbReference type="Gene3D" id="1.10.472.80">
    <property type="entry name" value="Ypt/Rab-GAP domain of gyp1p, domain 3"/>
    <property type="match status" value="1"/>
</dbReference>
<dbReference type="InterPro" id="IPR000195">
    <property type="entry name" value="Rab-GAP-TBC_dom"/>
</dbReference>
<dbReference type="InterPro" id="IPR035969">
    <property type="entry name" value="Rab-GAP_TBC_sf"/>
</dbReference>
<dbReference type="InterPro" id="IPR050302">
    <property type="entry name" value="Rab_GAP_TBC_domain"/>
</dbReference>
<dbReference type="PANTHER" id="PTHR47219">
    <property type="entry name" value="RAB GTPASE-ACTIVATING PROTEIN 1-LIKE"/>
    <property type="match status" value="1"/>
</dbReference>
<dbReference type="PANTHER" id="PTHR47219:SF4">
    <property type="entry name" value="TBC1 DOMAIN FAMILY MEMBER 10A"/>
    <property type="match status" value="1"/>
</dbReference>
<dbReference type="Pfam" id="PF00566">
    <property type="entry name" value="RabGAP-TBC"/>
    <property type="match status" value="1"/>
</dbReference>
<dbReference type="SMART" id="SM00164">
    <property type="entry name" value="TBC"/>
    <property type="match status" value="1"/>
</dbReference>
<dbReference type="SUPFAM" id="SSF47923">
    <property type="entry name" value="Ypt/Rab-GAP domain of gyp1p"/>
    <property type="match status" value="2"/>
</dbReference>
<dbReference type="PROSITE" id="PS50086">
    <property type="entry name" value="TBC_RABGAP"/>
    <property type="match status" value="1"/>
</dbReference>
<accession>Q8C9V1</accession>
<accession>Q3V3L7</accession>
<accession>Q6KAN0</accession>
<accession>Q8C2R6</accession>
<accession>Q8C6F7</accession>
<sequence length="444" mass="49930">MAQALGEDLLSELQDDSSSLGSDSELSGPSPYRQADRYGFIGGNSGELRLCQPSADLIRQREMKWVEMTLHWEKTMSRRYKKVKIQCRKGIPSALRARCWPLLCGARMCQKNNPGTYQELAAAPGDPQWMETIGRDLHRQFPLHEMFVSPQGHGQQGLLQVLKAYTLYRPEQGYCQAQGPVAAVLLMHLPPEEAFWCLVQICEVYLPGYYGPHMEAVQLDAEVFMALLRRQLPRVYKHLQQVGVGPLLYLPEWFLCLFTRSLPFPTVLRIWDAFLSEGAKVLFRVGLTLMRLALGTVEQRTACPGLLETLGALRAIPPTQLQEEVFMSQVHSVTLSERVLQQEIRIQLAQLSKSLPGPAPLPQARLPGAQAIFESQQLAGVRESTKPEIPRIVVQPPEEPKPPRRKPQTRGKTFHGLLIRARGPPIEGPSRSQRGSASFLDTRF</sequence>
<proteinExistence type="evidence at protein level"/>
<gene>
    <name type="primary">Tbc1d10c</name>
</gene>
<organism>
    <name type="scientific">Mus musculus</name>
    <name type="common">Mouse</name>
    <dbReference type="NCBI Taxonomy" id="10090"/>
    <lineage>
        <taxon>Eukaryota</taxon>
        <taxon>Metazoa</taxon>
        <taxon>Chordata</taxon>
        <taxon>Craniata</taxon>
        <taxon>Vertebrata</taxon>
        <taxon>Euteleostomi</taxon>
        <taxon>Mammalia</taxon>
        <taxon>Eutheria</taxon>
        <taxon>Euarchontoglires</taxon>
        <taxon>Glires</taxon>
        <taxon>Rodentia</taxon>
        <taxon>Myomorpha</taxon>
        <taxon>Muroidea</taxon>
        <taxon>Muridae</taxon>
        <taxon>Murinae</taxon>
        <taxon>Mus</taxon>
        <taxon>Mus</taxon>
    </lineage>
</organism>
<feature type="chain" id="PRO_0000284468" description="Carabin">
    <location>
        <begin position="1"/>
        <end position="444"/>
    </location>
</feature>
<feature type="domain" description="Rab-GAP TBC" evidence="2">
    <location>
        <begin position="90"/>
        <end position="278"/>
    </location>
</feature>
<feature type="region of interest" description="Disordered" evidence="3">
    <location>
        <begin position="1"/>
        <end position="32"/>
    </location>
</feature>
<feature type="region of interest" description="Disordered" evidence="3">
    <location>
        <begin position="383"/>
        <end position="444"/>
    </location>
</feature>
<feature type="region of interest" description="Interaction with calcineurin" evidence="1">
    <location>
        <begin position="404"/>
        <end position="444"/>
    </location>
</feature>
<feature type="compositionally biased region" description="Low complexity" evidence="3">
    <location>
        <begin position="16"/>
        <end position="28"/>
    </location>
</feature>
<feature type="compositionally biased region" description="Basic residues" evidence="3">
    <location>
        <begin position="403"/>
        <end position="413"/>
    </location>
</feature>
<feature type="site" description="Arginine finger" evidence="1">
    <location>
        <position position="135"/>
    </location>
</feature>
<feature type="site" description="Glutamine finger" evidence="1">
    <location>
        <position position="176"/>
    </location>
</feature>
<feature type="splice variant" id="VSP_024536" description="In isoform 3." evidence="5">
    <location>
        <begin position="1"/>
        <end position="62"/>
    </location>
</feature>
<feature type="splice variant" id="VSP_024537" description="In isoform 4." evidence="5">
    <original>QQGLLQVLKAYTLYRPEQGYCQAQGP</original>
    <variation>RGCCRFSRPTPCTGQSRDTARLRDL</variation>
    <location>
        <begin position="155"/>
        <end position="180"/>
    </location>
</feature>
<feature type="splice variant" id="VSP_024539" description="In isoform 4." evidence="5">
    <location>
        <begin position="181"/>
        <end position="444"/>
    </location>
</feature>
<feature type="splice variant" id="VSP_024538" description="In isoform 2." evidence="4">
    <location>
        <begin position="215"/>
        <end position="231"/>
    </location>
</feature>
<keyword id="KW-0025">Alternative splicing</keyword>
<keyword id="KW-0343">GTPase activation</keyword>
<keyword id="KW-1185">Reference proteome</keyword>
<evidence type="ECO:0000250" key="1"/>
<evidence type="ECO:0000255" key="2">
    <source>
        <dbReference type="PROSITE-ProRule" id="PRU00163"/>
    </source>
</evidence>
<evidence type="ECO:0000256" key="3">
    <source>
        <dbReference type="SAM" id="MobiDB-lite"/>
    </source>
</evidence>
<evidence type="ECO:0000303" key="4">
    <source>
    </source>
</evidence>
<evidence type="ECO:0000303" key="5">
    <source>
    </source>
</evidence>
<evidence type="ECO:0000305" key="6"/>
<protein>
    <recommendedName>
        <fullName>Carabin</fullName>
    </recommendedName>
    <alternativeName>
        <fullName>TBC1 domain family member 10C</fullName>
    </alternativeName>
</protein>
<reference key="1">
    <citation type="journal article" date="2004" name="DNA Res.">
        <title>Prediction of the coding sequences of mouse homologues of FLJ genes: the complete nucleotide sequences of 110 mouse FLJ-homologous cDNAs identified by screening of terminal sequences of cDNA clones randomly sampled from size-fractionated libraries.</title>
        <authorList>
            <person name="Okazaki N."/>
            <person name="Kikuno R."/>
            <person name="Ohara R."/>
            <person name="Inamoto S."/>
            <person name="Koseki H."/>
            <person name="Hiraoka S."/>
            <person name="Saga Y."/>
            <person name="Kitamura H."/>
            <person name="Nakagawa T."/>
            <person name="Nagase T."/>
            <person name="Ohara O."/>
            <person name="Koga H."/>
        </authorList>
    </citation>
    <scope>NUCLEOTIDE SEQUENCE [LARGE SCALE MRNA] (ISOFORM 2)</scope>
    <source>
        <strain>ICR</strain>
        <tissue>Spleen</tissue>
    </source>
</reference>
<reference key="2">
    <citation type="journal article" date="2005" name="Science">
        <title>The transcriptional landscape of the mammalian genome.</title>
        <authorList>
            <person name="Carninci P."/>
            <person name="Kasukawa T."/>
            <person name="Katayama S."/>
            <person name="Gough J."/>
            <person name="Frith M.C."/>
            <person name="Maeda N."/>
            <person name="Oyama R."/>
            <person name="Ravasi T."/>
            <person name="Lenhard B."/>
            <person name="Wells C."/>
            <person name="Kodzius R."/>
            <person name="Shimokawa K."/>
            <person name="Bajic V.B."/>
            <person name="Brenner S.E."/>
            <person name="Batalov S."/>
            <person name="Forrest A.R."/>
            <person name="Zavolan M."/>
            <person name="Davis M.J."/>
            <person name="Wilming L.G."/>
            <person name="Aidinis V."/>
            <person name="Allen J.E."/>
            <person name="Ambesi-Impiombato A."/>
            <person name="Apweiler R."/>
            <person name="Aturaliya R.N."/>
            <person name="Bailey T.L."/>
            <person name="Bansal M."/>
            <person name="Baxter L."/>
            <person name="Beisel K.W."/>
            <person name="Bersano T."/>
            <person name="Bono H."/>
            <person name="Chalk A.M."/>
            <person name="Chiu K.P."/>
            <person name="Choudhary V."/>
            <person name="Christoffels A."/>
            <person name="Clutterbuck D.R."/>
            <person name="Crowe M.L."/>
            <person name="Dalla E."/>
            <person name="Dalrymple B.P."/>
            <person name="de Bono B."/>
            <person name="Della Gatta G."/>
            <person name="di Bernardo D."/>
            <person name="Down T."/>
            <person name="Engstrom P."/>
            <person name="Fagiolini M."/>
            <person name="Faulkner G."/>
            <person name="Fletcher C.F."/>
            <person name="Fukushima T."/>
            <person name="Furuno M."/>
            <person name="Futaki S."/>
            <person name="Gariboldi M."/>
            <person name="Georgii-Hemming P."/>
            <person name="Gingeras T.R."/>
            <person name="Gojobori T."/>
            <person name="Green R.E."/>
            <person name="Gustincich S."/>
            <person name="Harbers M."/>
            <person name="Hayashi Y."/>
            <person name="Hensch T.K."/>
            <person name="Hirokawa N."/>
            <person name="Hill D."/>
            <person name="Huminiecki L."/>
            <person name="Iacono M."/>
            <person name="Ikeo K."/>
            <person name="Iwama A."/>
            <person name="Ishikawa T."/>
            <person name="Jakt M."/>
            <person name="Kanapin A."/>
            <person name="Katoh M."/>
            <person name="Kawasawa Y."/>
            <person name="Kelso J."/>
            <person name="Kitamura H."/>
            <person name="Kitano H."/>
            <person name="Kollias G."/>
            <person name="Krishnan S.P."/>
            <person name="Kruger A."/>
            <person name="Kummerfeld S.K."/>
            <person name="Kurochkin I.V."/>
            <person name="Lareau L.F."/>
            <person name="Lazarevic D."/>
            <person name="Lipovich L."/>
            <person name="Liu J."/>
            <person name="Liuni S."/>
            <person name="McWilliam S."/>
            <person name="Madan Babu M."/>
            <person name="Madera M."/>
            <person name="Marchionni L."/>
            <person name="Matsuda H."/>
            <person name="Matsuzawa S."/>
            <person name="Miki H."/>
            <person name="Mignone F."/>
            <person name="Miyake S."/>
            <person name="Morris K."/>
            <person name="Mottagui-Tabar S."/>
            <person name="Mulder N."/>
            <person name="Nakano N."/>
            <person name="Nakauchi H."/>
            <person name="Ng P."/>
            <person name="Nilsson R."/>
            <person name="Nishiguchi S."/>
            <person name="Nishikawa S."/>
            <person name="Nori F."/>
            <person name="Ohara O."/>
            <person name="Okazaki Y."/>
            <person name="Orlando V."/>
            <person name="Pang K.C."/>
            <person name="Pavan W.J."/>
            <person name="Pavesi G."/>
            <person name="Pesole G."/>
            <person name="Petrovsky N."/>
            <person name="Piazza S."/>
            <person name="Reed J."/>
            <person name="Reid J.F."/>
            <person name="Ring B.Z."/>
            <person name="Ringwald M."/>
            <person name="Rost B."/>
            <person name="Ruan Y."/>
            <person name="Salzberg S.L."/>
            <person name="Sandelin A."/>
            <person name="Schneider C."/>
            <person name="Schoenbach C."/>
            <person name="Sekiguchi K."/>
            <person name="Semple C.A."/>
            <person name="Seno S."/>
            <person name="Sessa L."/>
            <person name="Sheng Y."/>
            <person name="Shibata Y."/>
            <person name="Shimada H."/>
            <person name="Shimada K."/>
            <person name="Silva D."/>
            <person name="Sinclair B."/>
            <person name="Sperling S."/>
            <person name="Stupka E."/>
            <person name="Sugiura K."/>
            <person name="Sultana R."/>
            <person name="Takenaka Y."/>
            <person name="Taki K."/>
            <person name="Tammoja K."/>
            <person name="Tan S.L."/>
            <person name="Tang S."/>
            <person name="Taylor M.S."/>
            <person name="Tegner J."/>
            <person name="Teichmann S.A."/>
            <person name="Ueda H.R."/>
            <person name="van Nimwegen E."/>
            <person name="Verardo R."/>
            <person name="Wei C.L."/>
            <person name="Yagi K."/>
            <person name="Yamanishi H."/>
            <person name="Zabarovsky E."/>
            <person name="Zhu S."/>
            <person name="Zimmer A."/>
            <person name="Hide W."/>
            <person name="Bult C."/>
            <person name="Grimmond S.M."/>
            <person name="Teasdale R.D."/>
            <person name="Liu E.T."/>
            <person name="Brusic V."/>
            <person name="Quackenbush J."/>
            <person name="Wahlestedt C."/>
            <person name="Mattick J.S."/>
            <person name="Hume D.A."/>
            <person name="Kai C."/>
            <person name="Sasaki D."/>
            <person name="Tomaru Y."/>
            <person name="Fukuda S."/>
            <person name="Kanamori-Katayama M."/>
            <person name="Suzuki M."/>
            <person name="Aoki J."/>
            <person name="Arakawa T."/>
            <person name="Iida J."/>
            <person name="Imamura K."/>
            <person name="Itoh M."/>
            <person name="Kato T."/>
            <person name="Kawaji H."/>
            <person name="Kawagashira N."/>
            <person name="Kawashima T."/>
            <person name="Kojima M."/>
            <person name="Kondo S."/>
            <person name="Konno H."/>
            <person name="Nakano K."/>
            <person name="Ninomiya N."/>
            <person name="Nishio T."/>
            <person name="Okada M."/>
            <person name="Plessy C."/>
            <person name="Shibata K."/>
            <person name="Shiraki T."/>
            <person name="Suzuki S."/>
            <person name="Tagami M."/>
            <person name="Waki K."/>
            <person name="Watahiki A."/>
            <person name="Okamura-Oho Y."/>
            <person name="Suzuki H."/>
            <person name="Kawai J."/>
            <person name="Hayashizaki Y."/>
        </authorList>
    </citation>
    <scope>NUCLEOTIDE SEQUENCE [LARGE SCALE MRNA] (ISOFORMS 1; 3 AND 4)</scope>
    <source>
        <strain>C57BL/6J</strain>
        <strain>DBA/2J</strain>
        <strain>NOD</strain>
        <tissue>Pancreas</tissue>
        <tissue>Thymus</tissue>
    </source>
</reference>
<reference key="3">
    <citation type="journal article" date="2010" name="Cell">
        <title>A tissue-specific atlas of mouse protein phosphorylation and expression.</title>
        <authorList>
            <person name="Huttlin E.L."/>
            <person name="Jedrychowski M.P."/>
            <person name="Elias J.E."/>
            <person name="Goswami T."/>
            <person name="Rad R."/>
            <person name="Beausoleil S.A."/>
            <person name="Villen J."/>
            <person name="Haas W."/>
            <person name="Sowa M.E."/>
            <person name="Gygi S.P."/>
        </authorList>
    </citation>
    <scope>IDENTIFICATION BY MASS SPECTROMETRY [LARGE SCALE ANALYSIS]</scope>
    <source>
        <tissue>Lung</tissue>
        <tissue>Spleen</tissue>
    </source>
</reference>
<name>TB10C_MOUSE</name>